<gene>
    <name type="primary">Slc25a34</name>
</gene>
<name>S2534_RAT</name>
<feature type="chain" id="PRO_0000291791" description="Solute carrier family 25 member 34">
    <location>
        <begin position="1"/>
        <end position="318"/>
    </location>
</feature>
<feature type="transmembrane region" description="Helical; Name=1" evidence="3">
    <location>
        <begin position="21"/>
        <end position="41"/>
    </location>
</feature>
<feature type="transmembrane region" description="Helical; Name=2" evidence="3">
    <location>
        <begin position="59"/>
        <end position="79"/>
    </location>
</feature>
<feature type="transmembrane region" description="Helical; Name=3" evidence="3">
    <location>
        <begin position="112"/>
        <end position="134"/>
    </location>
</feature>
<feature type="transmembrane region" description="Helical; Name=4" evidence="3">
    <location>
        <begin position="184"/>
        <end position="205"/>
    </location>
</feature>
<feature type="transmembrane region" description="Helical; Name=5" evidence="3">
    <location>
        <begin position="220"/>
        <end position="240"/>
    </location>
</feature>
<feature type="transmembrane region" description="Helical; Name=6" evidence="3">
    <location>
        <begin position="292"/>
        <end position="315"/>
    </location>
</feature>
<feature type="repeat" description="Solcar 1">
    <location>
        <begin position="18"/>
        <end position="111"/>
    </location>
</feature>
<feature type="repeat" description="Solcar 2">
    <location>
        <begin position="115"/>
        <end position="208"/>
    </location>
</feature>
<feature type="repeat" description="Solcar 3">
    <location>
        <begin position="218"/>
        <end position="309"/>
    </location>
</feature>
<sequence>MTLTQAQMAPATDSREMVSPAVDLVLGASACCLACVFTNPLEVVKTRLQLQGELQAPGTYPRPYRGFVSSVTAVARADGLWGLQKGLAAGLLYQGLMNGVRFYCYSLACQAGLTQQPGGTVVAGAVAGALGAFVGSPAYLVKTQLQAQTGAAVAVGHQHQHQGVLSALETIWRQQGMLGLWRGVGAAVPRVTVGSAAQLATFTSAKAWVQDQQWFLEDSWLATLAGGMISSIAVVAVMAPFDVVSTRLYNQPVDRAGRGQLYGGLTDCLVKTCQQEGPLALYKGVGPAYLRLGPHTILSMFFWDELRKLALRAQHPGT</sequence>
<dbReference type="EMBL" id="BC083723">
    <property type="protein sequence ID" value="AAH83723.1"/>
    <property type="status" value="ALT_INIT"/>
    <property type="molecule type" value="mRNA"/>
</dbReference>
<dbReference type="RefSeq" id="NP_001013958.2">
    <property type="nucleotide sequence ID" value="NM_001013936.2"/>
</dbReference>
<dbReference type="SMR" id="Q5XIF9"/>
<dbReference type="FunCoup" id="Q5XIF9">
    <property type="interactions" value="37"/>
</dbReference>
<dbReference type="STRING" id="10116.ENSRNOP00000022820"/>
<dbReference type="GlyGen" id="Q5XIF9">
    <property type="glycosylation" value="1 site"/>
</dbReference>
<dbReference type="SwissPalm" id="Q5XIF9"/>
<dbReference type="PaxDb" id="10116-ENSRNOP00000022820"/>
<dbReference type="GeneID" id="298606"/>
<dbReference type="KEGG" id="rno:298606"/>
<dbReference type="AGR" id="RGD:1359157"/>
<dbReference type="CTD" id="284723"/>
<dbReference type="RGD" id="1359157">
    <property type="gene designation" value="Slc25a34"/>
</dbReference>
<dbReference type="eggNOG" id="KOG0755">
    <property type="taxonomic scope" value="Eukaryota"/>
</dbReference>
<dbReference type="HOGENOM" id="CLU_015166_14_3_1"/>
<dbReference type="InParanoid" id="Q5XIF9"/>
<dbReference type="OrthoDB" id="6703404at2759"/>
<dbReference type="PhylomeDB" id="Q5XIF9"/>
<dbReference type="TreeFam" id="TF324506"/>
<dbReference type="PRO" id="PR:Q5XIF9"/>
<dbReference type="Proteomes" id="UP000002494">
    <property type="component" value="Unplaced"/>
</dbReference>
<dbReference type="GO" id="GO:0005743">
    <property type="term" value="C:mitochondrial inner membrane"/>
    <property type="evidence" value="ECO:0007669"/>
    <property type="project" value="UniProtKB-SubCell"/>
</dbReference>
<dbReference type="GO" id="GO:0001835">
    <property type="term" value="P:blastocyst hatching"/>
    <property type="evidence" value="ECO:0000266"/>
    <property type="project" value="RGD"/>
</dbReference>
<dbReference type="FunFam" id="1.50.40.10:FF:000039">
    <property type="entry name" value="Solute carrier family 25 member 35"/>
    <property type="match status" value="1"/>
</dbReference>
<dbReference type="Gene3D" id="1.50.40.10">
    <property type="entry name" value="Mitochondrial carrier domain"/>
    <property type="match status" value="1"/>
</dbReference>
<dbReference type="InterPro" id="IPR051508">
    <property type="entry name" value="Mito_Carrier_Antiporter"/>
</dbReference>
<dbReference type="InterPro" id="IPR018108">
    <property type="entry name" value="Mitochondrial_sb/sol_carrier"/>
</dbReference>
<dbReference type="InterPro" id="IPR023395">
    <property type="entry name" value="Mt_carrier_dom_sf"/>
</dbReference>
<dbReference type="PANTHER" id="PTHR45928">
    <property type="entry name" value="RE38146P"/>
    <property type="match status" value="1"/>
</dbReference>
<dbReference type="PANTHER" id="PTHR45928:SF3">
    <property type="entry name" value="SOLUTE CARRIER FAMILY 25 MEMBER 34"/>
    <property type="match status" value="1"/>
</dbReference>
<dbReference type="Pfam" id="PF00153">
    <property type="entry name" value="Mito_carr"/>
    <property type="match status" value="3"/>
</dbReference>
<dbReference type="SUPFAM" id="SSF103506">
    <property type="entry name" value="Mitochondrial carrier"/>
    <property type="match status" value="1"/>
</dbReference>
<dbReference type="PROSITE" id="PS50920">
    <property type="entry name" value="SOLCAR"/>
    <property type="match status" value="3"/>
</dbReference>
<evidence type="ECO:0000250" key="1"/>
<evidence type="ECO:0000250" key="2">
    <source>
        <dbReference type="UniProtKB" id="Q6PIV7"/>
    </source>
</evidence>
<evidence type="ECO:0000255" key="3"/>
<evidence type="ECO:0000305" key="4"/>
<proteinExistence type="evidence at transcript level"/>
<protein>
    <recommendedName>
        <fullName>Solute carrier family 25 member 34</fullName>
    </recommendedName>
</protein>
<keyword id="KW-0472">Membrane</keyword>
<keyword id="KW-0496">Mitochondrion</keyword>
<keyword id="KW-0999">Mitochondrion inner membrane</keyword>
<keyword id="KW-1185">Reference proteome</keyword>
<keyword id="KW-0677">Repeat</keyword>
<keyword id="KW-0812">Transmembrane</keyword>
<keyword id="KW-1133">Transmembrane helix</keyword>
<keyword id="KW-0813">Transport</keyword>
<reference key="1">
    <citation type="journal article" date="2004" name="Genome Res.">
        <title>The status, quality, and expansion of the NIH full-length cDNA project: the Mammalian Gene Collection (MGC).</title>
        <authorList>
            <consortium name="The MGC Project Team"/>
        </authorList>
    </citation>
    <scope>NUCLEOTIDE SEQUENCE [LARGE SCALE MRNA]</scope>
    <source>
        <tissue>Heart</tissue>
    </source>
</reference>
<organism>
    <name type="scientific">Rattus norvegicus</name>
    <name type="common">Rat</name>
    <dbReference type="NCBI Taxonomy" id="10116"/>
    <lineage>
        <taxon>Eukaryota</taxon>
        <taxon>Metazoa</taxon>
        <taxon>Chordata</taxon>
        <taxon>Craniata</taxon>
        <taxon>Vertebrata</taxon>
        <taxon>Euteleostomi</taxon>
        <taxon>Mammalia</taxon>
        <taxon>Eutheria</taxon>
        <taxon>Euarchontoglires</taxon>
        <taxon>Glires</taxon>
        <taxon>Rodentia</taxon>
        <taxon>Myomorpha</taxon>
        <taxon>Muroidea</taxon>
        <taxon>Muridae</taxon>
        <taxon>Murinae</taxon>
        <taxon>Rattus</taxon>
    </lineage>
</organism>
<accession>Q5XIF9</accession>
<comment type="function">
    <text evidence="2">Putative antiporter that exchanges dicarboxylates and sulfur oxoanions across the inner membrane of mitochondria.</text>
</comment>
<comment type="catalytic activity">
    <reaction evidence="2">
        <text>a dicarboxylate(in) + sulfate(out) = a dicarboxylate(out) + sulfate(in)</text>
        <dbReference type="Rhea" id="RHEA:76595"/>
        <dbReference type="ChEBI" id="CHEBI:16189"/>
        <dbReference type="ChEBI" id="CHEBI:28965"/>
    </reaction>
</comment>
<comment type="subcellular location">
    <subcellularLocation>
        <location evidence="1">Mitochondrion inner membrane</location>
        <topology evidence="1">Multi-pass membrane protein</topology>
    </subcellularLocation>
</comment>
<comment type="similarity">
    <text evidence="4">Belongs to the mitochondrial carrier (TC 2.A.29) family.</text>
</comment>
<comment type="sequence caution" evidence="4">
    <conflict type="erroneous initiation">
        <sequence resource="EMBL-CDS" id="AAH83723"/>
    </conflict>
</comment>